<accession>O83272</accession>
<proteinExistence type="inferred from homology"/>
<gene>
    <name evidence="1" type="primary">rpsG</name>
    <name type="ordered locus">TP_0244</name>
</gene>
<feature type="chain" id="PRO_0000124373" description="Small ribosomal subunit protein uS7">
    <location>
        <begin position="1"/>
        <end position="156"/>
    </location>
</feature>
<reference key="1">
    <citation type="journal article" date="1998" name="Science">
        <title>Complete genome sequence of Treponema pallidum, the syphilis spirochete.</title>
        <authorList>
            <person name="Fraser C.M."/>
            <person name="Norris S.J."/>
            <person name="Weinstock G.M."/>
            <person name="White O."/>
            <person name="Sutton G.G."/>
            <person name="Dodson R.J."/>
            <person name="Gwinn M.L."/>
            <person name="Hickey E.K."/>
            <person name="Clayton R.A."/>
            <person name="Ketchum K.A."/>
            <person name="Sodergren E."/>
            <person name="Hardham J.M."/>
            <person name="McLeod M.P."/>
            <person name="Salzberg S.L."/>
            <person name="Peterson J.D."/>
            <person name="Khalak H.G."/>
            <person name="Richardson D.L."/>
            <person name="Howell J.K."/>
            <person name="Chidambaram M."/>
            <person name="Utterback T.R."/>
            <person name="McDonald L.A."/>
            <person name="Artiach P."/>
            <person name="Bowman C."/>
            <person name="Cotton M.D."/>
            <person name="Fujii C."/>
            <person name="Garland S.A."/>
            <person name="Hatch B."/>
            <person name="Horst K."/>
            <person name="Roberts K.M."/>
            <person name="Sandusky M."/>
            <person name="Weidman J.F."/>
            <person name="Smith H.O."/>
            <person name="Venter J.C."/>
        </authorList>
    </citation>
    <scope>NUCLEOTIDE SEQUENCE [LARGE SCALE GENOMIC DNA]</scope>
    <source>
        <strain>Nichols</strain>
    </source>
</reference>
<comment type="function">
    <text evidence="1">One of the primary rRNA binding proteins, it binds directly to 16S rRNA where it nucleates assembly of the head domain of the 30S subunit. Is located at the subunit interface close to the decoding center, probably blocks exit of the E-site tRNA.</text>
</comment>
<comment type="subunit">
    <text evidence="1">Part of the 30S ribosomal subunit. Contacts proteins S9 and S11.</text>
</comment>
<comment type="similarity">
    <text evidence="1">Belongs to the universal ribosomal protein uS7 family.</text>
</comment>
<name>RS7_TREPA</name>
<dbReference type="EMBL" id="AE000520">
    <property type="protein sequence ID" value="AAC65233.1"/>
    <property type="molecule type" value="Genomic_DNA"/>
</dbReference>
<dbReference type="PIR" id="G71347">
    <property type="entry name" value="G71347"/>
</dbReference>
<dbReference type="RefSeq" id="WP_010881692.1">
    <property type="nucleotide sequence ID" value="NC_021490.2"/>
</dbReference>
<dbReference type="SMR" id="O83272"/>
<dbReference type="STRING" id="243276.TP_0244"/>
<dbReference type="EnsemblBacteria" id="AAC65233">
    <property type="protein sequence ID" value="AAC65233"/>
    <property type="gene ID" value="TP_0244"/>
</dbReference>
<dbReference type="GeneID" id="93876036"/>
<dbReference type="KEGG" id="tpa:TP_0244"/>
<dbReference type="KEGG" id="tpw:TPANIC_0244"/>
<dbReference type="eggNOG" id="COG0049">
    <property type="taxonomic scope" value="Bacteria"/>
</dbReference>
<dbReference type="HOGENOM" id="CLU_072226_1_1_12"/>
<dbReference type="OrthoDB" id="9807653at2"/>
<dbReference type="Proteomes" id="UP000000811">
    <property type="component" value="Chromosome"/>
</dbReference>
<dbReference type="GO" id="GO:0015935">
    <property type="term" value="C:small ribosomal subunit"/>
    <property type="evidence" value="ECO:0007669"/>
    <property type="project" value="InterPro"/>
</dbReference>
<dbReference type="GO" id="GO:0019843">
    <property type="term" value="F:rRNA binding"/>
    <property type="evidence" value="ECO:0007669"/>
    <property type="project" value="UniProtKB-UniRule"/>
</dbReference>
<dbReference type="GO" id="GO:0003735">
    <property type="term" value="F:structural constituent of ribosome"/>
    <property type="evidence" value="ECO:0007669"/>
    <property type="project" value="InterPro"/>
</dbReference>
<dbReference type="GO" id="GO:0000049">
    <property type="term" value="F:tRNA binding"/>
    <property type="evidence" value="ECO:0007669"/>
    <property type="project" value="UniProtKB-UniRule"/>
</dbReference>
<dbReference type="GO" id="GO:0006412">
    <property type="term" value="P:translation"/>
    <property type="evidence" value="ECO:0007669"/>
    <property type="project" value="UniProtKB-UniRule"/>
</dbReference>
<dbReference type="CDD" id="cd14869">
    <property type="entry name" value="uS7_Bacteria"/>
    <property type="match status" value="1"/>
</dbReference>
<dbReference type="FunFam" id="1.10.455.10:FF:000001">
    <property type="entry name" value="30S ribosomal protein S7"/>
    <property type="match status" value="1"/>
</dbReference>
<dbReference type="Gene3D" id="1.10.455.10">
    <property type="entry name" value="Ribosomal protein S7 domain"/>
    <property type="match status" value="1"/>
</dbReference>
<dbReference type="HAMAP" id="MF_00480_B">
    <property type="entry name" value="Ribosomal_uS7_B"/>
    <property type="match status" value="1"/>
</dbReference>
<dbReference type="InterPro" id="IPR000235">
    <property type="entry name" value="Ribosomal_uS7"/>
</dbReference>
<dbReference type="InterPro" id="IPR005717">
    <property type="entry name" value="Ribosomal_uS7_bac/org-type"/>
</dbReference>
<dbReference type="InterPro" id="IPR020606">
    <property type="entry name" value="Ribosomal_uS7_CS"/>
</dbReference>
<dbReference type="InterPro" id="IPR023798">
    <property type="entry name" value="Ribosomal_uS7_dom"/>
</dbReference>
<dbReference type="InterPro" id="IPR036823">
    <property type="entry name" value="Ribosomal_uS7_dom_sf"/>
</dbReference>
<dbReference type="NCBIfam" id="TIGR01029">
    <property type="entry name" value="rpsG_bact"/>
    <property type="match status" value="1"/>
</dbReference>
<dbReference type="PANTHER" id="PTHR11205">
    <property type="entry name" value="RIBOSOMAL PROTEIN S7"/>
    <property type="match status" value="1"/>
</dbReference>
<dbReference type="Pfam" id="PF00177">
    <property type="entry name" value="Ribosomal_S7"/>
    <property type="match status" value="1"/>
</dbReference>
<dbReference type="PIRSF" id="PIRSF002122">
    <property type="entry name" value="RPS7p_RPS7a_RPS5e_RPS7o"/>
    <property type="match status" value="1"/>
</dbReference>
<dbReference type="SUPFAM" id="SSF47973">
    <property type="entry name" value="Ribosomal protein S7"/>
    <property type="match status" value="1"/>
</dbReference>
<dbReference type="PROSITE" id="PS00052">
    <property type="entry name" value="RIBOSOMAL_S7"/>
    <property type="match status" value="1"/>
</dbReference>
<evidence type="ECO:0000255" key="1">
    <source>
        <dbReference type="HAMAP-Rule" id="MF_00480"/>
    </source>
</evidence>
<evidence type="ECO:0000305" key="2"/>
<organism>
    <name type="scientific">Treponema pallidum (strain Nichols)</name>
    <dbReference type="NCBI Taxonomy" id="243276"/>
    <lineage>
        <taxon>Bacteria</taxon>
        <taxon>Pseudomonadati</taxon>
        <taxon>Spirochaetota</taxon>
        <taxon>Spirochaetia</taxon>
        <taxon>Spirochaetales</taxon>
        <taxon>Treponemataceae</taxon>
        <taxon>Treponema</taxon>
    </lineage>
</organism>
<protein>
    <recommendedName>
        <fullName evidence="1">Small ribosomal subunit protein uS7</fullName>
    </recommendedName>
    <alternativeName>
        <fullName evidence="2">30S ribosomal protein S7</fullName>
    </alternativeName>
</protein>
<sequence length="156" mass="17882">MGRKRRVSRRVPPPDARYNSVVLAKFICRMMLAGKKATAVGIMYDCLERIQQRTGEEPLPVFTKALENVKPAVEVKSRRVGGSTYQVPMEIRETRREALGMRWIIGAARRRSGRGMSERLAAEILDAYHSTGTAFKRKEDTHRMAEANKAFSHYRW</sequence>
<keyword id="KW-1185">Reference proteome</keyword>
<keyword id="KW-0687">Ribonucleoprotein</keyword>
<keyword id="KW-0689">Ribosomal protein</keyword>
<keyword id="KW-0694">RNA-binding</keyword>
<keyword id="KW-0699">rRNA-binding</keyword>
<keyword id="KW-0820">tRNA-binding</keyword>